<protein>
    <recommendedName>
        <fullName>Transketolase</fullName>
        <shortName>TK</shortName>
        <ecNumber>2.2.1.1</ecNumber>
    </recommendedName>
</protein>
<proteinExistence type="evidence at transcript level"/>
<comment type="function">
    <text evidence="1">Catalyzes the transfer of a two-carbon ketol group from a ketose donor to an aldose acceptor, via a covalent intermediate with the cofactor thiamine pyrophosphate.</text>
</comment>
<comment type="catalytic activity">
    <reaction>
        <text>D-sedoheptulose 7-phosphate + D-glyceraldehyde 3-phosphate = aldehydo-D-ribose 5-phosphate + D-xylulose 5-phosphate</text>
        <dbReference type="Rhea" id="RHEA:10508"/>
        <dbReference type="ChEBI" id="CHEBI:57483"/>
        <dbReference type="ChEBI" id="CHEBI:57737"/>
        <dbReference type="ChEBI" id="CHEBI:58273"/>
        <dbReference type="ChEBI" id="CHEBI:59776"/>
        <dbReference type="EC" id="2.2.1.1"/>
    </reaction>
</comment>
<comment type="cofactor">
    <cofactor evidence="1">
        <name>Mg(2+)</name>
        <dbReference type="ChEBI" id="CHEBI:18420"/>
    </cofactor>
    <cofactor evidence="1">
        <name>Ca(2+)</name>
        <dbReference type="ChEBI" id="CHEBI:29108"/>
    </cofactor>
    <cofactor evidence="1">
        <name>Mn(2+)</name>
        <dbReference type="ChEBI" id="CHEBI:29035"/>
    </cofactor>
    <cofactor evidence="1">
        <name>Co(2+)</name>
        <dbReference type="ChEBI" id="CHEBI:48828"/>
    </cofactor>
    <text evidence="1">Binds 1 Mg(2+) ion per subunit. Can also utilize other divalent metal cations, such as Ca(2+), Mn(2+) and Co(2+).</text>
</comment>
<comment type="cofactor">
    <cofactor evidence="1">
        <name>thiamine diphosphate</name>
        <dbReference type="ChEBI" id="CHEBI:58937"/>
    </cofactor>
    <text evidence="1">Binds 1 thiamine pyrophosphate per subunit.</text>
</comment>
<comment type="subunit">
    <text evidence="1">Homodimer.</text>
</comment>
<comment type="similarity">
    <text evidence="4">Belongs to the transketolase family.</text>
</comment>
<reference key="1">
    <citation type="submission" date="2004-11" db="EMBL/GenBank/DDBJ databases">
        <authorList>
            <consortium name="The German cDNA consortium"/>
        </authorList>
    </citation>
    <scope>NUCLEOTIDE SEQUENCE [LARGE SCALE MRNA]</scope>
    <source>
        <tissue>Brain cortex</tissue>
    </source>
</reference>
<gene>
    <name type="primary">TKT</name>
</gene>
<organism>
    <name type="scientific">Pongo abelii</name>
    <name type="common">Sumatran orangutan</name>
    <name type="synonym">Pongo pygmaeus abelii</name>
    <dbReference type="NCBI Taxonomy" id="9601"/>
    <lineage>
        <taxon>Eukaryota</taxon>
        <taxon>Metazoa</taxon>
        <taxon>Chordata</taxon>
        <taxon>Craniata</taxon>
        <taxon>Vertebrata</taxon>
        <taxon>Euteleostomi</taxon>
        <taxon>Mammalia</taxon>
        <taxon>Eutheria</taxon>
        <taxon>Euarchontoglires</taxon>
        <taxon>Primates</taxon>
        <taxon>Haplorrhini</taxon>
        <taxon>Catarrhini</taxon>
        <taxon>Hominidae</taxon>
        <taxon>Pongo</taxon>
    </lineage>
</organism>
<feature type="chain" id="PRO_0000236208" description="Transketolase">
    <location>
        <begin position="1"/>
        <end position="623"/>
    </location>
</feature>
<feature type="active site" description="Proton donor" evidence="1">
    <location>
        <position position="366"/>
    </location>
</feature>
<feature type="binding site" evidence="1">
    <location>
        <position position="37"/>
    </location>
    <ligand>
        <name>substrate</name>
    </ligand>
</feature>
<feature type="binding site" evidence="1">
    <location>
        <position position="40"/>
    </location>
    <ligand>
        <name>thiamine diphosphate</name>
        <dbReference type="ChEBI" id="CHEBI:58937"/>
    </ligand>
</feature>
<feature type="binding site" evidence="1">
    <location>
        <position position="77"/>
    </location>
    <ligand>
        <name>thiamine diphosphate</name>
        <dbReference type="ChEBI" id="CHEBI:58937"/>
    </ligand>
</feature>
<feature type="binding site" evidence="1">
    <location>
        <begin position="123"/>
        <end position="125"/>
    </location>
    <ligand>
        <name>thiamine diphosphate</name>
        <dbReference type="ChEBI" id="CHEBI:58937"/>
    </ligand>
</feature>
<feature type="binding site" evidence="1">
    <location>
        <position position="155"/>
    </location>
    <ligand>
        <name>Mg(2+)</name>
        <dbReference type="ChEBI" id="CHEBI:18420"/>
    </ligand>
</feature>
<feature type="binding site" evidence="1">
    <location>
        <position position="156"/>
    </location>
    <ligand>
        <name>thiamine diphosphate</name>
        <dbReference type="ChEBI" id="CHEBI:58937"/>
    </ligand>
</feature>
<feature type="binding site" evidence="1">
    <location>
        <position position="185"/>
    </location>
    <ligand>
        <name>Mg(2+)</name>
        <dbReference type="ChEBI" id="CHEBI:18420"/>
    </ligand>
</feature>
<feature type="binding site" evidence="1">
    <location>
        <position position="185"/>
    </location>
    <ligand>
        <name>thiamine diphosphate</name>
        <dbReference type="ChEBI" id="CHEBI:58937"/>
    </ligand>
</feature>
<feature type="binding site" evidence="1">
    <location>
        <position position="187"/>
    </location>
    <ligand>
        <name>Mg(2+)</name>
        <dbReference type="ChEBI" id="CHEBI:18420"/>
    </ligand>
</feature>
<feature type="binding site" evidence="1">
    <location>
        <position position="244"/>
    </location>
    <ligand>
        <name>thiamine diphosphate</name>
        <dbReference type="ChEBI" id="CHEBI:58937"/>
    </ligand>
</feature>
<feature type="binding site" evidence="1">
    <location>
        <position position="258"/>
    </location>
    <ligand>
        <name>substrate</name>
    </ligand>
</feature>
<feature type="binding site" evidence="1">
    <location>
        <position position="258"/>
    </location>
    <ligand>
        <name>thiamine diphosphate</name>
        <dbReference type="ChEBI" id="CHEBI:58937"/>
    </ligand>
</feature>
<feature type="binding site" evidence="1">
    <location>
        <position position="318"/>
    </location>
    <ligand>
        <name>substrate</name>
    </ligand>
</feature>
<feature type="binding site" evidence="1">
    <location>
        <position position="392"/>
    </location>
    <ligand>
        <name>thiamine diphosphate</name>
        <dbReference type="ChEBI" id="CHEBI:58937"/>
    </ligand>
</feature>
<feature type="binding site" evidence="1">
    <location>
        <position position="416"/>
    </location>
    <ligand>
        <name>substrate</name>
    </ligand>
</feature>
<feature type="binding site" evidence="1">
    <location>
        <position position="424"/>
    </location>
    <ligand>
        <name>substrate</name>
    </ligand>
</feature>
<feature type="binding site" evidence="1">
    <location>
        <position position="428"/>
    </location>
    <ligand>
        <name>thiamine diphosphate</name>
        <dbReference type="ChEBI" id="CHEBI:58937"/>
    </ligand>
</feature>
<feature type="binding site" evidence="1">
    <location>
        <position position="474"/>
    </location>
    <ligand>
        <name>substrate</name>
    </ligand>
</feature>
<feature type="site" description="Important for catalytic activity" evidence="1">
    <location>
        <position position="37"/>
    </location>
</feature>
<feature type="site" description="Important for catalytic activity" evidence="1">
    <location>
        <position position="258"/>
    </location>
</feature>
<feature type="modified residue" description="N-acetylmethionine" evidence="2">
    <location>
        <position position="1"/>
    </location>
</feature>
<feature type="modified residue" description="N6-acetyllysine" evidence="2">
    <location>
        <position position="6"/>
    </location>
</feature>
<feature type="modified residue" description="N6-acetyllysine" evidence="2">
    <location>
        <position position="11"/>
    </location>
</feature>
<feature type="modified residue" description="Phosphoserine" evidence="2">
    <location>
        <position position="104"/>
    </location>
</feature>
<feature type="modified residue" description="N6-acetyllysine" evidence="2">
    <location>
        <position position="144"/>
    </location>
</feature>
<feature type="modified residue" description="N6-acetyllysine" evidence="2">
    <location>
        <position position="204"/>
    </location>
</feature>
<feature type="modified residue" description="N6-acetyllysine" evidence="3">
    <location>
        <position position="232"/>
    </location>
</feature>
<feature type="modified residue" description="N6-acetyllysine" evidence="2">
    <location>
        <position position="241"/>
    </location>
</feature>
<feature type="modified residue" description="N6-acetyllysine" evidence="2">
    <location>
        <position position="260"/>
    </location>
</feature>
<feature type="modified residue" description="Phosphotyrosine" evidence="2">
    <location>
        <position position="275"/>
    </location>
</feature>
<feature type="modified residue" description="Phosphothreonine" evidence="2">
    <location>
        <position position="287"/>
    </location>
</feature>
<feature type="modified residue" description="Phosphoserine" evidence="2">
    <location>
        <position position="295"/>
    </location>
</feature>
<feature type="modified residue" description="N6-acetyllysine" evidence="3">
    <location>
        <position position="538"/>
    </location>
</feature>
<feature type="modified residue" description="N6-acetyllysine" evidence="2">
    <location>
        <position position="603"/>
    </location>
</feature>
<feature type="cross-link" description="Glycyl lysine isopeptide (Lys-Gly) (interchain with G-Cter in SUMO2)" evidence="2">
    <location>
        <position position="352"/>
    </location>
</feature>
<evidence type="ECO:0000250" key="1"/>
<evidence type="ECO:0000250" key="2">
    <source>
        <dbReference type="UniProtKB" id="P29401"/>
    </source>
</evidence>
<evidence type="ECO:0000250" key="3">
    <source>
        <dbReference type="UniProtKB" id="P40142"/>
    </source>
</evidence>
<evidence type="ECO:0000305" key="4"/>
<dbReference type="EC" id="2.2.1.1"/>
<dbReference type="EMBL" id="CR861331">
    <property type="protein sequence ID" value="CAH93395.1"/>
    <property type="molecule type" value="mRNA"/>
</dbReference>
<dbReference type="RefSeq" id="NP_001126993.1">
    <property type="nucleotide sequence ID" value="NM_001133521.1"/>
</dbReference>
<dbReference type="SMR" id="Q5R4C1"/>
<dbReference type="FunCoup" id="Q5R4C1">
    <property type="interactions" value="1838"/>
</dbReference>
<dbReference type="STRING" id="9601.ENSPPYP00000023523"/>
<dbReference type="GeneID" id="100174016"/>
<dbReference type="KEGG" id="pon:100174016"/>
<dbReference type="CTD" id="7086"/>
<dbReference type="eggNOG" id="KOG0523">
    <property type="taxonomic scope" value="Eukaryota"/>
</dbReference>
<dbReference type="InParanoid" id="Q5R4C1"/>
<dbReference type="OrthoDB" id="10267175at2759"/>
<dbReference type="Proteomes" id="UP000001595">
    <property type="component" value="Unplaced"/>
</dbReference>
<dbReference type="GO" id="GO:0005789">
    <property type="term" value="C:endoplasmic reticulum membrane"/>
    <property type="evidence" value="ECO:0007669"/>
    <property type="project" value="TreeGrafter"/>
</dbReference>
<dbReference type="GO" id="GO:0070062">
    <property type="term" value="C:extracellular exosome"/>
    <property type="evidence" value="ECO:0007669"/>
    <property type="project" value="TreeGrafter"/>
</dbReference>
<dbReference type="GO" id="GO:0046872">
    <property type="term" value="F:metal ion binding"/>
    <property type="evidence" value="ECO:0007669"/>
    <property type="project" value="UniProtKB-KW"/>
</dbReference>
<dbReference type="GO" id="GO:0030976">
    <property type="term" value="F:thiamine pyrophosphate binding"/>
    <property type="evidence" value="ECO:0007669"/>
    <property type="project" value="TreeGrafter"/>
</dbReference>
<dbReference type="GO" id="GO:0004802">
    <property type="term" value="F:transketolase activity"/>
    <property type="evidence" value="ECO:0007669"/>
    <property type="project" value="UniProtKB-EC"/>
</dbReference>
<dbReference type="GO" id="GO:0009052">
    <property type="term" value="P:pentose-phosphate shunt, non-oxidative branch"/>
    <property type="evidence" value="ECO:0007669"/>
    <property type="project" value="TreeGrafter"/>
</dbReference>
<dbReference type="CDD" id="cd07033">
    <property type="entry name" value="TPP_PYR_DXS_TK_like"/>
    <property type="match status" value="1"/>
</dbReference>
<dbReference type="CDD" id="cd02012">
    <property type="entry name" value="TPP_TK"/>
    <property type="match status" value="1"/>
</dbReference>
<dbReference type="FunFam" id="3.40.50.970:FF:000028">
    <property type="entry name" value="Transketolase isoform 1"/>
    <property type="match status" value="1"/>
</dbReference>
<dbReference type="FunFam" id="3.40.50.970:FF:000033">
    <property type="entry name" value="Transketolase isoform 1"/>
    <property type="match status" value="1"/>
</dbReference>
<dbReference type="FunFam" id="3.40.50.920:FF:000008">
    <property type="entry name" value="transketolase isoform X2"/>
    <property type="match status" value="1"/>
</dbReference>
<dbReference type="Gene3D" id="3.40.50.920">
    <property type="match status" value="1"/>
</dbReference>
<dbReference type="Gene3D" id="3.40.50.970">
    <property type="match status" value="2"/>
</dbReference>
<dbReference type="InterPro" id="IPR029061">
    <property type="entry name" value="THDP-binding"/>
</dbReference>
<dbReference type="InterPro" id="IPR009014">
    <property type="entry name" value="Transketo_C/PFOR_II"/>
</dbReference>
<dbReference type="InterPro" id="IPR051424">
    <property type="entry name" value="Transketolase-like"/>
</dbReference>
<dbReference type="InterPro" id="IPR005475">
    <property type="entry name" value="Transketolase-like_Pyr-bd"/>
</dbReference>
<dbReference type="InterPro" id="IPR020826">
    <property type="entry name" value="Transketolase_BS"/>
</dbReference>
<dbReference type="InterPro" id="IPR033248">
    <property type="entry name" value="Transketolase_C"/>
</dbReference>
<dbReference type="InterPro" id="IPR049557">
    <property type="entry name" value="Transketolase_CS"/>
</dbReference>
<dbReference type="InterPro" id="IPR005474">
    <property type="entry name" value="Transketolase_N"/>
</dbReference>
<dbReference type="NCBIfam" id="NF004559">
    <property type="entry name" value="PRK05899.2-5"/>
    <property type="match status" value="1"/>
</dbReference>
<dbReference type="PANTHER" id="PTHR43195">
    <property type="entry name" value="TRANSKETOLASE"/>
    <property type="match status" value="1"/>
</dbReference>
<dbReference type="PANTHER" id="PTHR43195:SF3">
    <property type="entry name" value="TRANSKETOLASE"/>
    <property type="match status" value="1"/>
</dbReference>
<dbReference type="Pfam" id="PF02779">
    <property type="entry name" value="Transket_pyr"/>
    <property type="match status" value="1"/>
</dbReference>
<dbReference type="Pfam" id="PF02780">
    <property type="entry name" value="Transketolase_C"/>
    <property type="match status" value="1"/>
</dbReference>
<dbReference type="Pfam" id="PF00456">
    <property type="entry name" value="Transketolase_N"/>
    <property type="match status" value="1"/>
</dbReference>
<dbReference type="SMART" id="SM00861">
    <property type="entry name" value="Transket_pyr"/>
    <property type="match status" value="1"/>
</dbReference>
<dbReference type="SUPFAM" id="SSF52518">
    <property type="entry name" value="Thiamin diphosphate-binding fold (THDP-binding)"/>
    <property type="match status" value="2"/>
</dbReference>
<dbReference type="SUPFAM" id="SSF52922">
    <property type="entry name" value="TK C-terminal domain-like"/>
    <property type="match status" value="1"/>
</dbReference>
<dbReference type="PROSITE" id="PS00801">
    <property type="entry name" value="TRANSKETOLASE_1"/>
    <property type="match status" value="1"/>
</dbReference>
<dbReference type="PROSITE" id="PS00802">
    <property type="entry name" value="TRANSKETOLASE_2"/>
    <property type="match status" value="1"/>
</dbReference>
<name>TKT_PONAB</name>
<keyword id="KW-0007">Acetylation</keyword>
<keyword id="KW-0106">Calcium</keyword>
<keyword id="KW-1017">Isopeptide bond</keyword>
<keyword id="KW-0460">Magnesium</keyword>
<keyword id="KW-0479">Metal-binding</keyword>
<keyword id="KW-0597">Phosphoprotein</keyword>
<keyword id="KW-1185">Reference proteome</keyword>
<keyword id="KW-0786">Thiamine pyrophosphate</keyword>
<keyword id="KW-0808">Transferase</keyword>
<keyword id="KW-0832">Ubl conjugation</keyword>
<accession>Q5R4C1</accession>
<sequence>MEGYHKPDQQKLQALKDTANRLRISSIQATTAAGSGHPTSCCSAAEIMAVLFFHTMRYKSQDPRNPHNDRFVLSKGHAAPILYAVWAEAGFLPEAELLNLRKISSDLDGHPVPKQAFTDVATGSLGQGLGVACGMAYTGKYFDKASYRVYCLLGDGELSEGSVWEAMAFASIYKLDNLVAILDINRLGQSDPAPLQHQMDIYQKRCEAFGWHAVIVDGHSVEELCKAFGQAKHQPTAIIAKTFKGRGITGVEDKESWHGKPLPKNMAEQIIQEIYSQIQSKKKILATPPQEDAPSVDIANIRMPSLPSYKVGDKIATRKAYGQALAKLGHASDRIIALDGDTKNPTFSEIFKKEHPDRFIECYIAEQNMVSIAVGCATRNRTVPFCSTFAAFFTRAFDQIRMAAISESNINLCGSHCGVSIGEDGPSQMALENLAMFRSVPTSTVFYPSDGVVTEKAVELAANTKGICFIRTSRPENAIIYNNNEDFQVGQAKVVLKSKDDQVTVIGAGVTLHEALAAAELLKKEKINIRVLDPFTIKPLDRKLILDSARATKGRILTVEDHYYEGGIGEAVSSAVVGEPGITVTHLAVNRVPRSGKPAELLKMFGIDKDAIAQAVRGLITKA</sequence>